<accession>O52394</accession>
<accession>A9W9V1</accession>
<dbReference type="EMBL" id="AF037259">
    <property type="protein sequence ID" value="AAC38570.1"/>
    <property type="molecule type" value="Genomic_DNA"/>
</dbReference>
<dbReference type="EMBL" id="CP000909">
    <property type="protein sequence ID" value="ABY34587.1"/>
    <property type="molecule type" value="Genomic_DNA"/>
</dbReference>
<dbReference type="RefSeq" id="WP_012257243.1">
    <property type="nucleotide sequence ID" value="NC_010175.1"/>
</dbReference>
<dbReference type="RefSeq" id="YP_001634976.1">
    <property type="nucleotide sequence ID" value="NC_010175.1"/>
</dbReference>
<dbReference type="SMR" id="O52394"/>
<dbReference type="FunCoup" id="O52394">
    <property type="interactions" value="478"/>
</dbReference>
<dbReference type="STRING" id="324602.Caur_1359"/>
<dbReference type="EnsemblBacteria" id="ABY34587">
    <property type="protein sequence ID" value="ABY34587"/>
    <property type="gene ID" value="Caur_1359"/>
</dbReference>
<dbReference type="KEGG" id="cau:Caur_1359"/>
<dbReference type="PATRIC" id="fig|324602.8.peg.1550"/>
<dbReference type="eggNOG" id="COG0468">
    <property type="taxonomic scope" value="Bacteria"/>
</dbReference>
<dbReference type="HOGENOM" id="CLU_040469_3_2_0"/>
<dbReference type="InParanoid" id="O52394"/>
<dbReference type="Proteomes" id="UP000002008">
    <property type="component" value="Chromosome"/>
</dbReference>
<dbReference type="GO" id="GO:0005737">
    <property type="term" value="C:cytoplasm"/>
    <property type="evidence" value="ECO:0007669"/>
    <property type="project" value="UniProtKB-SubCell"/>
</dbReference>
<dbReference type="GO" id="GO:0005524">
    <property type="term" value="F:ATP binding"/>
    <property type="evidence" value="ECO:0007669"/>
    <property type="project" value="UniProtKB-UniRule"/>
</dbReference>
<dbReference type="GO" id="GO:0016887">
    <property type="term" value="F:ATP hydrolysis activity"/>
    <property type="evidence" value="ECO:0007669"/>
    <property type="project" value="InterPro"/>
</dbReference>
<dbReference type="GO" id="GO:0140664">
    <property type="term" value="F:ATP-dependent DNA damage sensor activity"/>
    <property type="evidence" value="ECO:0007669"/>
    <property type="project" value="InterPro"/>
</dbReference>
<dbReference type="GO" id="GO:0003684">
    <property type="term" value="F:damaged DNA binding"/>
    <property type="evidence" value="ECO:0007669"/>
    <property type="project" value="UniProtKB-UniRule"/>
</dbReference>
<dbReference type="GO" id="GO:0003697">
    <property type="term" value="F:single-stranded DNA binding"/>
    <property type="evidence" value="ECO:0007669"/>
    <property type="project" value="UniProtKB-UniRule"/>
</dbReference>
<dbReference type="GO" id="GO:0006310">
    <property type="term" value="P:DNA recombination"/>
    <property type="evidence" value="ECO:0007669"/>
    <property type="project" value="UniProtKB-UniRule"/>
</dbReference>
<dbReference type="GO" id="GO:0006281">
    <property type="term" value="P:DNA repair"/>
    <property type="evidence" value="ECO:0007669"/>
    <property type="project" value="UniProtKB-UniRule"/>
</dbReference>
<dbReference type="GO" id="GO:0009432">
    <property type="term" value="P:SOS response"/>
    <property type="evidence" value="ECO:0007669"/>
    <property type="project" value="UniProtKB-UniRule"/>
</dbReference>
<dbReference type="CDD" id="cd00983">
    <property type="entry name" value="RecA"/>
    <property type="match status" value="1"/>
</dbReference>
<dbReference type="FunFam" id="3.40.50.300:FF:000087">
    <property type="entry name" value="Recombinase RecA"/>
    <property type="match status" value="1"/>
</dbReference>
<dbReference type="Gene3D" id="3.40.50.300">
    <property type="entry name" value="P-loop containing nucleotide triphosphate hydrolases"/>
    <property type="match status" value="1"/>
</dbReference>
<dbReference type="HAMAP" id="MF_00268">
    <property type="entry name" value="RecA"/>
    <property type="match status" value="1"/>
</dbReference>
<dbReference type="InterPro" id="IPR003593">
    <property type="entry name" value="AAA+_ATPase"/>
</dbReference>
<dbReference type="InterPro" id="IPR013765">
    <property type="entry name" value="DNA_recomb/repair_RecA"/>
</dbReference>
<dbReference type="InterPro" id="IPR020584">
    <property type="entry name" value="DNA_recomb/repair_RecA_CS"/>
</dbReference>
<dbReference type="InterPro" id="IPR027417">
    <property type="entry name" value="P-loop_NTPase"/>
</dbReference>
<dbReference type="InterPro" id="IPR049261">
    <property type="entry name" value="RecA-like_C"/>
</dbReference>
<dbReference type="InterPro" id="IPR049428">
    <property type="entry name" value="RecA-like_N"/>
</dbReference>
<dbReference type="InterPro" id="IPR020588">
    <property type="entry name" value="RecA_ATP-bd"/>
</dbReference>
<dbReference type="InterPro" id="IPR023400">
    <property type="entry name" value="RecA_C_sf"/>
</dbReference>
<dbReference type="InterPro" id="IPR020587">
    <property type="entry name" value="RecA_monomer-monomer_interface"/>
</dbReference>
<dbReference type="NCBIfam" id="TIGR02012">
    <property type="entry name" value="tigrfam_recA"/>
    <property type="match status" value="1"/>
</dbReference>
<dbReference type="PANTHER" id="PTHR45900:SF1">
    <property type="entry name" value="MITOCHONDRIAL DNA REPAIR PROTEIN RECA HOMOLOG-RELATED"/>
    <property type="match status" value="1"/>
</dbReference>
<dbReference type="PANTHER" id="PTHR45900">
    <property type="entry name" value="RECA"/>
    <property type="match status" value="1"/>
</dbReference>
<dbReference type="Pfam" id="PF00154">
    <property type="entry name" value="RecA"/>
    <property type="match status" value="1"/>
</dbReference>
<dbReference type="Pfam" id="PF21096">
    <property type="entry name" value="RecA_C"/>
    <property type="match status" value="1"/>
</dbReference>
<dbReference type="PRINTS" id="PR00142">
    <property type="entry name" value="RECA"/>
</dbReference>
<dbReference type="SMART" id="SM00382">
    <property type="entry name" value="AAA"/>
    <property type="match status" value="1"/>
</dbReference>
<dbReference type="SUPFAM" id="SSF52540">
    <property type="entry name" value="P-loop containing nucleoside triphosphate hydrolases"/>
    <property type="match status" value="1"/>
</dbReference>
<dbReference type="SUPFAM" id="SSF54752">
    <property type="entry name" value="RecA protein, C-terminal domain"/>
    <property type="match status" value="1"/>
</dbReference>
<dbReference type="PROSITE" id="PS00321">
    <property type="entry name" value="RECA_1"/>
    <property type="match status" value="1"/>
</dbReference>
<dbReference type="PROSITE" id="PS50162">
    <property type="entry name" value="RECA_2"/>
    <property type="match status" value="1"/>
</dbReference>
<dbReference type="PROSITE" id="PS50163">
    <property type="entry name" value="RECA_3"/>
    <property type="match status" value="1"/>
</dbReference>
<organism>
    <name type="scientific">Chloroflexus aurantiacus (strain ATCC 29366 / DSM 635 / J-10-fl)</name>
    <dbReference type="NCBI Taxonomy" id="324602"/>
    <lineage>
        <taxon>Bacteria</taxon>
        <taxon>Bacillati</taxon>
        <taxon>Chloroflexota</taxon>
        <taxon>Chloroflexia</taxon>
        <taxon>Chloroflexales</taxon>
        <taxon>Chloroflexineae</taxon>
        <taxon>Chloroflexaceae</taxon>
        <taxon>Chloroflexus</taxon>
    </lineage>
</organism>
<gene>
    <name evidence="1" type="primary">recA</name>
    <name type="ordered locus">Caur_1359</name>
</gene>
<name>RECA_CHLAA</name>
<protein>
    <recommendedName>
        <fullName evidence="1">Protein RecA</fullName>
    </recommendedName>
    <alternativeName>
        <fullName evidence="1">Recombinase A</fullName>
    </alternativeName>
</protein>
<evidence type="ECO:0000255" key="1">
    <source>
        <dbReference type="HAMAP-Rule" id="MF_00268"/>
    </source>
</evidence>
<evidence type="ECO:0000305" key="2"/>
<keyword id="KW-0067">ATP-binding</keyword>
<keyword id="KW-0963">Cytoplasm</keyword>
<keyword id="KW-0227">DNA damage</keyword>
<keyword id="KW-0233">DNA recombination</keyword>
<keyword id="KW-0234">DNA repair</keyword>
<keyword id="KW-0238">DNA-binding</keyword>
<keyword id="KW-0547">Nucleotide-binding</keyword>
<keyword id="KW-1185">Reference proteome</keyword>
<keyword id="KW-0742">SOS response</keyword>
<proteinExistence type="inferred from homology"/>
<sequence length="351" mass="37837">MAITPEKEKALAATMAQIDRKFGKGSIMKMGEASSRLAIEAIPTGSIALDIALGIGGVPRGRVVEIFGPESSGKTTLAQHIIAEAQKMGGVCAFIDAEHAFDPVYAARCGVNIDDLLVSQPDTGEQALEICEMLVRSNAIDVIVIDSVAALVPRAEIEGEMGDSMPGMQARLMSQALRKLSGAISKSRTVVIFINQLRMKIGVMFGSPETTTGGQALKFYASVRLDIRRVETLKQGQEAIGSRVRVKVIKNKVAPPFRQAEFDILANEGISREGNIIDIGTELGIIRKSGAWFYLGEDRLGQGRENVREFLKNNPALTDEIERLIKAQALTNPTVIAPSVDVGDDDAIFEE</sequence>
<comment type="function">
    <text evidence="1">Can catalyze the hydrolysis of ATP in the presence of single-stranded DNA, the ATP-dependent uptake of single-stranded DNA by duplex DNA, and the ATP-dependent hybridization of homologous single-stranded DNAs. It interacts with LexA causing its activation and leading to its autocatalytic cleavage.</text>
</comment>
<comment type="subcellular location">
    <subcellularLocation>
        <location evidence="1">Cytoplasm</location>
    </subcellularLocation>
</comment>
<comment type="similarity">
    <text evidence="1">Belongs to the RecA family.</text>
</comment>
<reference key="1">
    <citation type="journal article" date="1998" name="FEMS Microbiol. Lett.">
        <title>The phylogenetic relationships of Chlorobium tepidum and Chloroflexus aurantiacus based upon their RecA sequences.</title>
        <authorList>
            <person name="Gruber T.M."/>
            <person name="Eisen J.A."/>
            <person name="Gish K."/>
            <person name="Bryant D.A."/>
        </authorList>
    </citation>
    <scope>NUCLEOTIDE SEQUENCE [GENOMIC DNA]</scope>
</reference>
<reference key="2">
    <citation type="journal article" date="2011" name="BMC Genomics">
        <title>Complete genome sequence of the filamentous anoxygenic phototrophic bacterium Chloroflexus aurantiacus.</title>
        <authorList>
            <person name="Tang K.H."/>
            <person name="Barry K."/>
            <person name="Chertkov O."/>
            <person name="Dalin E."/>
            <person name="Han C.S."/>
            <person name="Hauser L.J."/>
            <person name="Honchak B.M."/>
            <person name="Karbach L.E."/>
            <person name="Land M.L."/>
            <person name="Lapidus A."/>
            <person name="Larimer F.W."/>
            <person name="Mikhailova N."/>
            <person name="Pitluck S."/>
            <person name="Pierson B.K."/>
            <person name="Blankenship R.E."/>
        </authorList>
    </citation>
    <scope>NUCLEOTIDE SEQUENCE [LARGE SCALE GENOMIC DNA]</scope>
    <source>
        <strain>ATCC 29366 / DSM 635 / J-10-fl</strain>
    </source>
</reference>
<feature type="chain" id="PRO_0000122682" description="Protein RecA">
    <location>
        <begin position="1"/>
        <end position="351"/>
    </location>
</feature>
<feature type="binding site" evidence="1">
    <location>
        <begin position="68"/>
        <end position="75"/>
    </location>
    <ligand>
        <name>ATP</name>
        <dbReference type="ChEBI" id="CHEBI:30616"/>
    </ligand>
</feature>
<feature type="sequence conflict" description="In Ref. 1; AAC38570." evidence="2" ref="1">
    <original>L</original>
    <variation>V</variation>
    <location>
        <position position="37"/>
    </location>
</feature>
<feature type="sequence conflict" description="In Ref. 1; AAC38570." evidence="2" ref="1">
    <original>FGS</original>
    <variation>LGT</variation>
    <location>
        <begin position="205"/>
        <end position="207"/>
    </location>
</feature>
<feature type="sequence conflict" description="In Ref. 1; AAC38570." evidence="2" ref="1">
    <original>A</original>
    <variation>T</variation>
    <location>
        <position position="221"/>
    </location>
</feature>
<feature type="sequence conflict" description="In Ref. 1; AAC38570." evidence="2" ref="1">
    <original>F</original>
    <variation>Y</variation>
    <location>
        <position position="257"/>
    </location>
</feature>